<accession>P83672</accession>
<proteinExistence type="evidence at protein level"/>
<reference evidence="4" key="1">
    <citation type="journal article" date="2001" name="Arch. Biochem. Biophys.">
        <title>PFA, a novel mollusk agglutinin, is structurally related to the ribosome-inactivating protein superfamily.</title>
        <authorList>
            <person name="Arreguin-Espinosa R."/>
            <person name="Fenton B."/>
            <person name="Vazquez-Contreras E."/>
            <person name="Arreguin B."/>
            <person name="Garcia-Hernandez E."/>
        </authorList>
    </citation>
    <scope>PROTEIN SEQUENCE</scope>
    <scope>SUBUNIT</scope>
    <scope>MASS SPECTROMETRY</scope>
    <scope>GLYCOSYLATION</scope>
    <scope>CIRCULAR DICHROISM ANALYSIS</scope>
    <source>
        <tissue evidence="4">Muscle</tissue>
    </source>
</reference>
<reference evidence="4" key="2">
    <citation type="journal article" date="1997" name="Biochem. Mol. Biol. Int.">
        <title>Biochemical properties of hemagglutinins in the mollusk Pomacea flagellata.</title>
        <authorList>
            <person name="Arreguin-Espinosa R."/>
            <person name="Arreguin-Lozano B."/>
        </authorList>
    </citation>
    <scope>PROTEIN SEQUENCE OF 1-12</scope>
    <scope>GLYCOSYLATION</scope>
    <scope>FUNCTION</scope>
</reference>
<keyword id="KW-0903">Direct protein sequencing</keyword>
<keyword id="KW-0325">Glycoprotein</keyword>
<keyword id="KW-0348">Hemagglutinin</keyword>
<keyword id="KW-0430">Lectin</keyword>
<protein>
    <recommendedName>
        <fullName>Agglutinin-1</fullName>
    </recommendedName>
    <alternativeName>
        <fullName>PFA-1</fullName>
    </alternativeName>
</protein>
<sequence>LAKTNFPLNFPIHVRDAGVQWSPLGRLTTGADVRHEIPARVGHRLARWA</sequence>
<dbReference type="GO" id="GO:0030246">
    <property type="term" value="F:carbohydrate binding"/>
    <property type="evidence" value="ECO:0007669"/>
    <property type="project" value="UniProtKB-KW"/>
</dbReference>
<organism evidence="4">
    <name type="scientific">Pomacea flagellata</name>
    <name type="common">Apple snail</name>
    <dbReference type="NCBI Taxonomy" id="249358"/>
    <lineage>
        <taxon>Eukaryota</taxon>
        <taxon>Metazoa</taxon>
        <taxon>Spiralia</taxon>
        <taxon>Lophotrochozoa</taxon>
        <taxon>Mollusca</taxon>
        <taxon>Gastropoda</taxon>
        <taxon>Caenogastropoda</taxon>
        <taxon>Architaenioglossa</taxon>
        <taxon>Ampullarioidea</taxon>
        <taxon>Ampullariidae</taxon>
        <taxon>Pomacea</taxon>
    </lineage>
</organism>
<comment type="function">
    <text evidence="2">Beta-galactoside specific lectin. Has a hemagglutinating activity on erythrocytes.</text>
</comment>
<comment type="subunit">
    <text evidence="1">Homooligomer.</text>
</comment>
<comment type="PTM">
    <text evidence="1 2">Glycosylated.</text>
</comment>
<comment type="mass spectrometry"/>
<name>AGG1_POMFL</name>
<feature type="chain" id="PRO_0000064494" description="Agglutinin-1">
    <location>
        <begin position="1"/>
        <end position="49"/>
    </location>
</feature>
<feature type="non-consecutive residues" evidence="3">
    <location>
        <begin position="38"/>
        <end position="39"/>
    </location>
</feature>
<evidence type="ECO:0000269" key="1">
    <source>
    </source>
</evidence>
<evidence type="ECO:0000269" key="2">
    <source>
    </source>
</evidence>
<evidence type="ECO:0000303" key="3">
    <source>
    </source>
</evidence>
<evidence type="ECO:0000305" key="4"/>